<evidence type="ECO:0000250" key="1"/>
<evidence type="ECO:0000255" key="2"/>
<evidence type="ECO:0000305" key="3"/>
<name>DF169_ARATH</name>
<gene>
    <name type="ordered locus">At4g10603</name>
    <name type="ORF">T4F9</name>
</gene>
<protein>
    <recommendedName>
        <fullName>Putative defensin-like protein 169</fullName>
    </recommendedName>
</protein>
<proteinExistence type="inferred from homology"/>
<accession>Q2V3K0</accession>
<comment type="subcellular location">
    <subcellularLocation>
        <location evidence="1">Secreted</location>
    </subcellularLocation>
</comment>
<comment type="similarity">
    <text evidence="3">Belongs to the DEFL family.</text>
</comment>
<sequence>MKKTFSFTVLILFVIPLLVTGLMDSMPQRHPVEGWCKRPLPNQKPGPCNNDRCSARCKEQKQFEFKGGKAMGICSSENRCLCTFRCR</sequence>
<organism>
    <name type="scientific">Arabidopsis thaliana</name>
    <name type="common">Mouse-ear cress</name>
    <dbReference type="NCBI Taxonomy" id="3702"/>
    <lineage>
        <taxon>Eukaryota</taxon>
        <taxon>Viridiplantae</taxon>
        <taxon>Streptophyta</taxon>
        <taxon>Embryophyta</taxon>
        <taxon>Tracheophyta</taxon>
        <taxon>Spermatophyta</taxon>
        <taxon>Magnoliopsida</taxon>
        <taxon>eudicotyledons</taxon>
        <taxon>Gunneridae</taxon>
        <taxon>Pentapetalae</taxon>
        <taxon>rosids</taxon>
        <taxon>malvids</taxon>
        <taxon>Brassicales</taxon>
        <taxon>Brassicaceae</taxon>
        <taxon>Camelineae</taxon>
        <taxon>Arabidopsis</taxon>
    </lineage>
</organism>
<feature type="signal peptide" evidence="2">
    <location>
        <begin position="1"/>
        <end position="21"/>
    </location>
</feature>
<feature type="chain" id="PRO_0000379685" description="Putative defensin-like protein 169">
    <location>
        <begin position="22"/>
        <end position="87"/>
    </location>
</feature>
<feature type="disulfide bond" evidence="1">
    <location>
        <begin position="36"/>
        <end position="86"/>
    </location>
</feature>
<feature type="disulfide bond" evidence="1">
    <location>
        <begin position="48"/>
        <end position="74"/>
    </location>
</feature>
<feature type="disulfide bond" evidence="1">
    <location>
        <begin position="53"/>
        <end position="80"/>
    </location>
</feature>
<feature type="disulfide bond" evidence="1">
    <location>
        <begin position="57"/>
        <end position="82"/>
    </location>
</feature>
<keyword id="KW-0929">Antimicrobial</keyword>
<keyword id="KW-1015">Disulfide bond</keyword>
<keyword id="KW-0295">Fungicide</keyword>
<keyword id="KW-0611">Plant defense</keyword>
<keyword id="KW-1185">Reference proteome</keyword>
<keyword id="KW-0964">Secreted</keyword>
<keyword id="KW-0732">Signal</keyword>
<dbReference type="EMBL" id="AL049523">
    <property type="status" value="NOT_ANNOTATED_CDS"/>
    <property type="molecule type" value="Genomic_DNA"/>
</dbReference>
<dbReference type="EMBL" id="AL161517">
    <property type="status" value="NOT_ANNOTATED_CDS"/>
    <property type="molecule type" value="Genomic_DNA"/>
</dbReference>
<dbReference type="EMBL" id="CP002687">
    <property type="protein sequence ID" value="AEE82906.1"/>
    <property type="molecule type" value="Genomic_DNA"/>
</dbReference>
<dbReference type="RefSeq" id="NP_001031613.1">
    <property type="nucleotide sequence ID" value="NM_001036536.2"/>
</dbReference>
<dbReference type="SMR" id="Q2V3K0"/>
<dbReference type="PaxDb" id="3702-AT4G10603.1"/>
<dbReference type="ProteomicsDB" id="224205"/>
<dbReference type="EnsemblPlants" id="AT4G10603.1">
    <property type="protein sequence ID" value="AT4G10603.1"/>
    <property type="gene ID" value="AT4G10603"/>
</dbReference>
<dbReference type="GeneID" id="3769814"/>
<dbReference type="Gramene" id="AT4G10603.1">
    <property type="protein sequence ID" value="AT4G10603.1"/>
    <property type="gene ID" value="AT4G10603"/>
</dbReference>
<dbReference type="KEGG" id="ath:AT4G10603"/>
<dbReference type="Araport" id="AT4G10603"/>
<dbReference type="TAIR" id="AT4G10603"/>
<dbReference type="HOGENOM" id="CLU_2486421_0_0_1"/>
<dbReference type="InParanoid" id="Q2V3K0"/>
<dbReference type="PhylomeDB" id="Q2V3K0"/>
<dbReference type="PRO" id="PR:Q2V3K0"/>
<dbReference type="Proteomes" id="UP000006548">
    <property type="component" value="Chromosome 4"/>
</dbReference>
<dbReference type="ExpressionAtlas" id="Q2V3K0">
    <property type="expression patterns" value="baseline"/>
</dbReference>
<dbReference type="GO" id="GO:0005576">
    <property type="term" value="C:extracellular region"/>
    <property type="evidence" value="ECO:0007669"/>
    <property type="project" value="UniProtKB-SubCell"/>
</dbReference>
<dbReference type="GO" id="GO:0050832">
    <property type="term" value="P:defense response to fungus"/>
    <property type="evidence" value="ECO:0007669"/>
    <property type="project" value="UniProtKB-KW"/>
</dbReference>
<dbReference type="GO" id="GO:0031640">
    <property type="term" value="P:killing of cells of another organism"/>
    <property type="evidence" value="ECO:0007669"/>
    <property type="project" value="UniProtKB-KW"/>
</dbReference>
<dbReference type="InterPro" id="IPR010851">
    <property type="entry name" value="DEFL"/>
</dbReference>
<dbReference type="Pfam" id="PF07333">
    <property type="entry name" value="SLR1-BP"/>
    <property type="match status" value="1"/>
</dbReference>
<reference key="1">
    <citation type="journal article" date="1999" name="Nature">
        <title>Sequence and analysis of chromosome 4 of the plant Arabidopsis thaliana.</title>
        <authorList>
            <person name="Mayer K.F.X."/>
            <person name="Schueller C."/>
            <person name="Wambutt R."/>
            <person name="Murphy G."/>
            <person name="Volckaert G."/>
            <person name="Pohl T."/>
            <person name="Duesterhoeft A."/>
            <person name="Stiekema W."/>
            <person name="Entian K.-D."/>
            <person name="Terryn N."/>
            <person name="Harris B."/>
            <person name="Ansorge W."/>
            <person name="Brandt P."/>
            <person name="Grivell L.A."/>
            <person name="Rieger M."/>
            <person name="Weichselgartner M."/>
            <person name="de Simone V."/>
            <person name="Obermaier B."/>
            <person name="Mache R."/>
            <person name="Mueller M."/>
            <person name="Kreis M."/>
            <person name="Delseny M."/>
            <person name="Puigdomenech P."/>
            <person name="Watson M."/>
            <person name="Schmidtheini T."/>
            <person name="Reichert B."/>
            <person name="Portetelle D."/>
            <person name="Perez-Alonso M."/>
            <person name="Boutry M."/>
            <person name="Bancroft I."/>
            <person name="Vos P."/>
            <person name="Hoheisel J."/>
            <person name="Zimmermann W."/>
            <person name="Wedler H."/>
            <person name="Ridley P."/>
            <person name="Langham S.-A."/>
            <person name="McCullagh B."/>
            <person name="Bilham L."/>
            <person name="Robben J."/>
            <person name="van der Schueren J."/>
            <person name="Grymonprez B."/>
            <person name="Chuang Y.-J."/>
            <person name="Vandenbussche F."/>
            <person name="Braeken M."/>
            <person name="Weltjens I."/>
            <person name="Voet M."/>
            <person name="Bastiaens I."/>
            <person name="Aert R."/>
            <person name="Defoor E."/>
            <person name="Weitzenegger T."/>
            <person name="Bothe G."/>
            <person name="Ramsperger U."/>
            <person name="Hilbert H."/>
            <person name="Braun M."/>
            <person name="Holzer E."/>
            <person name="Brandt A."/>
            <person name="Peters S."/>
            <person name="van Staveren M."/>
            <person name="Dirkse W."/>
            <person name="Mooijman P."/>
            <person name="Klein Lankhorst R."/>
            <person name="Rose M."/>
            <person name="Hauf J."/>
            <person name="Koetter P."/>
            <person name="Berneiser S."/>
            <person name="Hempel S."/>
            <person name="Feldpausch M."/>
            <person name="Lamberth S."/>
            <person name="Van den Daele H."/>
            <person name="De Keyser A."/>
            <person name="Buysshaert C."/>
            <person name="Gielen J."/>
            <person name="Villarroel R."/>
            <person name="De Clercq R."/>
            <person name="van Montagu M."/>
            <person name="Rogers J."/>
            <person name="Cronin A."/>
            <person name="Quail M.A."/>
            <person name="Bray-Allen S."/>
            <person name="Clark L."/>
            <person name="Doggett J."/>
            <person name="Hall S."/>
            <person name="Kay M."/>
            <person name="Lennard N."/>
            <person name="McLay K."/>
            <person name="Mayes R."/>
            <person name="Pettett A."/>
            <person name="Rajandream M.A."/>
            <person name="Lyne M."/>
            <person name="Benes V."/>
            <person name="Rechmann S."/>
            <person name="Borkova D."/>
            <person name="Bloecker H."/>
            <person name="Scharfe M."/>
            <person name="Grimm M."/>
            <person name="Loehnert T.-H."/>
            <person name="Dose S."/>
            <person name="de Haan M."/>
            <person name="Maarse A.C."/>
            <person name="Schaefer M."/>
            <person name="Mueller-Auer S."/>
            <person name="Gabel C."/>
            <person name="Fuchs M."/>
            <person name="Fartmann B."/>
            <person name="Granderath K."/>
            <person name="Dauner D."/>
            <person name="Herzl A."/>
            <person name="Neumann S."/>
            <person name="Argiriou A."/>
            <person name="Vitale D."/>
            <person name="Liguori R."/>
            <person name="Piravandi E."/>
            <person name="Massenet O."/>
            <person name="Quigley F."/>
            <person name="Clabauld G."/>
            <person name="Muendlein A."/>
            <person name="Felber R."/>
            <person name="Schnabl S."/>
            <person name="Hiller R."/>
            <person name="Schmidt W."/>
            <person name="Lecharny A."/>
            <person name="Aubourg S."/>
            <person name="Chefdor F."/>
            <person name="Cooke R."/>
            <person name="Berger C."/>
            <person name="Monfort A."/>
            <person name="Casacuberta E."/>
            <person name="Gibbons T."/>
            <person name="Weber N."/>
            <person name="Vandenbol M."/>
            <person name="Bargues M."/>
            <person name="Terol J."/>
            <person name="Torres A."/>
            <person name="Perez-Perez A."/>
            <person name="Purnelle B."/>
            <person name="Bent E."/>
            <person name="Johnson S."/>
            <person name="Tacon D."/>
            <person name="Jesse T."/>
            <person name="Heijnen L."/>
            <person name="Schwarz S."/>
            <person name="Scholler P."/>
            <person name="Heber S."/>
            <person name="Francs P."/>
            <person name="Bielke C."/>
            <person name="Frishman D."/>
            <person name="Haase D."/>
            <person name="Lemcke K."/>
            <person name="Mewes H.-W."/>
            <person name="Stocker S."/>
            <person name="Zaccaria P."/>
            <person name="Bevan M."/>
            <person name="Wilson R.K."/>
            <person name="de la Bastide M."/>
            <person name="Habermann K."/>
            <person name="Parnell L."/>
            <person name="Dedhia N."/>
            <person name="Gnoj L."/>
            <person name="Schutz K."/>
            <person name="Huang E."/>
            <person name="Spiegel L."/>
            <person name="Sekhon M."/>
            <person name="Murray J."/>
            <person name="Sheet P."/>
            <person name="Cordes M."/>
            <person name="Abu-Threideh J."/>
            <person name="Stoneking T."/>
            <person name="Kalicki J."/>
            <person name="Graves T."/>
            <person name="Harmon G."/>
            <person name="Edwards J."/>
            <person name="Latreille P."/>
            <person name="Courtney L."/>
            <person name="Cloud J."/>
            <person name="Abbott A."/>
            <person name="Scott K."/>
            <person name="Johnson D."/>
            <person name="Minx P."/>
            <person name="Bentley D."/>
            <person name="Fulton B."/>
            <person name="Miller N."/>
            <person name="Greco T."/>
            <person name="Kemp K."/>
            <person name="Kramer J."/>
            <person name="Fulton L."/>
            <person name="Mardis E."/>
            <person name="Dante M."/>
            <person name="Pepin K."/>
            <person name="Hillier L.W."/>
            <person name="Nelson J."/>
            <person name="Spieth J."/>
            <person name="Ryan E."/>
            <person name="Andrews S."/>
            <person name="Geisel C."/>
            <person name="Layman D."/>
            <person name="Du H."/>
            <person name="Ali J."/>
            <person name="Berghoff A."/>
            <person name="Jones K."/>
            <person name="Drone K."/>
            <person name="Cotton M."/>
            <person name="Joshu C."/>
            <person name="Antonoiu B."/>
            <person name="Zidanic M."/>
            <person name="Strong C."/>
            <person name="Sun H."/>
            <person name="Lamar B."/>
            <person name="Yordan C."/>
            <person name="Ma P."/>
            <person name="Zhong J."/>
            <person name="Preston R."/>
            <person name="Vil D."/>
            <person name="Shekher M."/>
            <person name="Matero A."/>
            <person name="Shah R."/>
            <person name="Swaby I.K."/>
            <person name="O'Shaughnessy A."/>
            <person name="Rodriguez M."/>
            <person name="Hoffman J."/>
            <person name="Till S."/>
            <person name="Granat S."/>
            <person name="Shohdy N."/>
            <person name="Hasegawa A."/>
            <person name="Hameed A."/>
            <person name="Lodhi M."/>
            <person name="Johnson A."/>
            <person name="Chen E."/>
            <person name="Marra M.A."/>
            <person name="Martienssen R."/>
            <person name="McCombie W.R."/>
        </authorList>
    </citation>
    <scope>NUCLEOTIDE SEQUENCE [LARGE SCALE GENOMIC DNA]</scope>
    <source>
        <strain>cv. Columbia</strain>
    </source>
</reference>
<reference key="2">
    <citation type="journal article" date="2017" name="Plant J.">
        <title>Araport11: a complete reannotation of the Arabidopsis thaliana reference genome.</title>
        <authorList>
            <person name="Cheng C.Y."/>
            <person name="Krishnakumar V."/>
            <person name="Chan A.P."/>
            <person name="Thibaud-Nissen F."/>
            <person name="Schobel S."/>
            <person name="Town C.D."/>
        </authorList>
    </citation>
    <scope>GENOME REANNOTATION</scope>
    <source>
        <strain>cv. Columbia</strain>
    </source>
</reference>
<reference key="3">
    <citation type="journal article" date="2005" name="Plant Physiol.">
        <title>Genome organization of more than 300 defensin-like genes in Arabidopsis.</title>
        <authorList>
            <person name="Silverstein K.A.T."/>
            <person name="Graham M.A."/>
            <person name="Paape T.D."/>
            <person name="VandenBosch K.A."/>
        </authorList>
    </citation>
    <scope>GENE FAMILY</scope>
</reference>